<sequence length="196" mass="20853">MKVAKDLVVSLAYQVRTEDGVLVDESPVSAPLDYLHGHGSLISGLETALEGHEVGDKFDVAVGANDAYGQYDENLVQRVPKDVFMGVDELQVGMRFLAETDQGPVPVEITAVEDDHVVVDGNHMLAGQNLKFNVEVVAIREATEEELAHGHVHGAHDHHHDHDHDGCCGGHGHDHGHEHGGEGCCGGKGNGGCGCH</sequence>
<keyword id="KW-0143">Chaperone</keyword>
<keyword id="KW-0963">Cytoplasm</keyword>
<keyword id="KW-0413">Isomerase</keyword>
<keyword id="KW-0479">Metal-binding</keyword>
<keyword id="KW-0533">Nickel</keyword>
<keyword id="KW-1185">Reference proteome</keyword>
<keyword id="KW-0697">Rotamase</keyword>
<organism>
    <name type="scientific">Escherichia coli O6:H1 (strain CFT073 / ATCC 700928 / UPEC)</name>
    <dbReference type="NCBI Taxonomy" id="199310"/>
    <lineage>
        <taxon>Bacteria</taxon>
        <taxon>Pseudomonadati</taxon>
        <taxon>Pseudomonadota</taxon>
        <taxon>Gammaproteobacteria</taxon>
        <taxon>Enterobacterales</taxon>
        <taxon>Enterobacteriaceae</taxon>
        <taxon>Escherichia</taxon>
    </lineage>
</organism>
<name>SLYD_ECOL6</name>
<accession>P0A9L0</accession>
<accession>P30856</accession>
<comment type="function">
    <text evidence="1">Folding helper with both chaperone and peptidyl-prolyl cis-trans isomerase (PPIase) activities. Chaperone activity prevents aggregation of unfolded or partially folded proteins and promotes their correct folding. PPIases catalyze the cis-trans isomerization of Xaa-Pro bonds of peptides, which accelerates slow steps of protein folding and thus shortens the lifetime of intermediates. Both strategies lower the concentration of intermediates and increase the productivity and yield of the folding reaction. SlyD could be involved in Tat-dependent translocation, by binding to the Tat-type signal of folded proteins (By similarity).</text>
</comment>
<comment type="function">
    <text evidence="1">Also involved in hydrogenase metallocenter assembly, probably by participating in the nickel insertion step. This function in hydrogenase biosynthesis requires chaperone activity and the presence of the metal-binding domain, but not PPIase activity (By similarity).</text>
</comment>
<comment type="catalytic activity">
    <reaction>
        <text>[protein]-peptidylproline (omega=180) = [protein]-peptidylproline (omega=0)</text>
        <dbReference type="Rhea" id="RHEA:16237"/>
        <dbReference type="Rhea" id="RHEA-COMP:10747"/>
        <dbReference type="Rhea" id="RHEA-COMP:10748"/>
        <dbReference type="ChEBI" id="CHEBI:83833"/>
        <dbReference type="ChEBI" id="CHEBI:83834"/>
        <dbReference type="EC" id="5.2.1.8"/>
    </reaction>
</comment>
<comment type="subunit">
    <text evidence="1">Monomer. Binds to a broad range of unrelated Tat signal sequences. Interacts with the hydrogenase nickel incorporation protein HypB (By similarity).</text>
</comment>
<comment type="subcellular location">
    <subcellularLocation>
        <location evidence="1">Cytoplasm</location>
    </subcellularLocation>
</comment>
<comment type="domain">
    <text evidence="1">The N-terminal region consists of two globular folded domains that contain prolyl isomerase and chaperone activities.</text>
</comment>
<comment type="domain">
    <text evidence="1">The C-terminal region binds nickel ions.</text>
</comment>
<comment type="similarity">
    <text evidence="4">Belongs to the FKBP-type PPIase family.</text>
</comment>
<dbReference type="EC" id="5.2.1.8"/>
<dbReference type="EMBL" id="AE014075">
    <property type="protein sequence ID" value="AAN82561.1"/>
    <property type="molecule type" value="Genomic_DNA"/>
</dbReference>
<dbReference type="RefSeq" id="WP_000861334.1">
    <property type="nucleotide sequence ID" value="NZ_CP051263.1"/>
</dbReference>
<dbReference type="BMRB" id="P0A9L0"/>
<dbReference type="SMR" id="P0A9L0"/>
<dbReference type="STRING" id="199310.c4123"/>
<dbReference type="GeneID" id="93778649"/>
<dbReference type="KEGG" id="ecc:c4123"/>
<dbReference type="eggNOG" id="COG1047">
    <property type="taxonomic scope" value="Bacteria"/>
</dbReference>
<dbReference type="HOGENOM" id="CLU_098197_1_0_6"/>
<dbReference type="BioCyc" id="ECOL199310:C4123-MONOMER"/>
<dbReference type="Proteomes" id="UP000001410">
    <property type="component" value="Chromosome"/>
</dbReference>
<dbReference type="GO" id="GO:0005737">
    <property type="term" value="C:cytoplasm"/>
    <property type="evidence" value="ECO:0007669"/>
    <property type="project" value="UniProtKB-SubCell"/>
</dbReference>
<dbReference type="GO" id="GO:0046872">
    <property type="term" value="F:metal ion binding"/>
    <property type="evidence" value="ECO:0007669"/>
    <property type="project" value="UniProtKB-KW"/>
</dbReference>
<dbReference type="GO" id="GO:0003755">
    <property type="term" value="F:peptidyl-prolyl cis-trans isomerase activity"/>
    <property type="evidence" value="ECO:0007669"/>
    <property type="project" value="UniProtKB-KW"/>
</dbReference>
<dbReference type="GO" id="GO:0042026">
    <property type="term" value="P:protein refolding"/>
    <property type="evidence" value="ECO:0007669"/>
    <property type="project" value="UniProtKB-ARBA"/>
</dbReference>
<dbReference type="FunFam" id="2.40.10.330:FF:000001">
    <property type="entry name" value="Peptidyl-prolyl cis-trans isomerase"/>
    <property type="match status" value="1"/>
</dbReference>
<dbReference type="Gene3D" id="2.40.10.330">
    <property type="match status" value="1"/>
</dbReference>
<dbReference type="Gene3D" id="3.10.50.40">
    <property type="match status" value="1"/>
</dbReference>
<dbReference type="InterPro" id="IPR046357">
    <property type="entry name" value="PPIase_dom_sf"/>
</dbReference>
<dbReference type="InterPro" id="IPR001179">
    <property type="entry name" value="PPIase_FKBP_dom"/>
</dbReference>
<dbReference type="InterPro" id="IPR048261">
    <property type="entry name" value="SlpA/SlyD-like_ins_sf"/>
</dbReference>
<dbReference type="NCBIfam" id="NF008008">
    <property type="entry name" value="PRK10737.1"/>
    <property type="match status" value="1"/>
</dbReference>
<dbReference type="PANTHER" id="PTHR47861">
    <property type="entry name" value="FKBP-TYPE PEPTIDYL-PROLYL CIS-TRANS ISOMERASE SLYD"/>
    <property type="match status" value="1"/>
</dbReference>
<dbReference type="PANTHER" id="PTHR47861:SF3">
    <property type="entry name" value="FKBP-TYPE PEPTIDYL-PROLYL CIS-TRANS ISOMERASE SLYD"/>
    <property type="match status" value="1"/>
</dbReference>
<dbReference type="Pfam" id="PF00254">
    <property type="entry name" value="FKBP_C"/>
    <property type="match status" value="1"/>
</dbReference>
<dbReference type="SUPFAM" id="SSF54534">
    <property type="entry name" value="FKBP-like"/>
    <property type="match status" value="1"/>
</dbReference>
<dbReference type="PROSITE" id="PS50059">
    <property type="entry name" value="FKBP_PPIASE"/>
    <property type="match status" value="1"/>
</dbReference>
<evidence type="ECO:0000250" key="1"/>
<evidence type="ECO:0000255" key="2"/>
<evidence type="ECO:0000255" key="3">
    <source>
        <dbReference type="PROSITE-ProRule" id="PRU00277"/>
    </source>
</evidence>
<evidence type="ECO:0000305" key="4"/>
<feature type="chain" id="PRO_0000075357" description="FKBP-type peptidyl-prolyl cis-trans isomerase SlyD">
    <location>
        <begin position="1"/>
        <end position="196"/>
    </location>
</feature>
<feature type="domain" description="PPIase FKBP-type" evidence="3">
    <location>
        <begin position="1"/>
        <end position="95"/>
    </location>
</feature>
<feature type="region of interest" description="PPIase first part" evidence="1">
    <location>
        <begin position="1"/>
        <end position="69"/>
    </location>
</feature>
<feature type="region of interest" description="IF-chaperone" evidence="1">
    <location>
        <begin position="76"/>
        <end position="120"/>
    </location>
</feature>
<feature type="region of interest" description="PPIase second part" evidence="1">
    <location>
        <begin position="129"/>
        <end position="151"/>
    </location>
</feature>
<feature type="binding site" evidence="2">
    <location>
        <position position="167"/>
    </location>
    <ligand>
        <name>Ni(2+)</name>
        <dbReference type="ChEBI" id="CHEBI:49786"/>
    </ligand>
</feature>
<feature type="binding site" evidence="2">
    <location>
        <position position="168"/>
    </location>
    <ligand>
        <name>Ni(2+)</name>
        <dbReference type="ChEBI" id="CHEBI:49786"/>
    </ligand>
</feature>
<feature type="binding site" evidence="2">
    <location>
        <position position="184"/>
    </location>
    <ligand>
        <name>Ni(2+)</name>
        <dbReference type="ChEBI" id="CHEBI:49786"/>
    </ligand>
</feature>
<feature type="binding site" evidence="2">
    <location>
        <position position="185"/>
    </location>
    <ligand>
        <name>Ni(2+)</name>
        <dbReference type="ChEBI" id="CHEBI:49786"/>
    </ligand>
</feature>
<feature type="binding site" evidence="2">
    <location>
        <position position="193"/>
    </location>
    <ligand>
        <name>Ni(2+)</name>
        <dbReference type="ChEBI" id="CHEBI:49786"/>
    </ligand>
</feature>
<feature type="binding site" evidence="2">
    <location>
        <position position="195"/>
    </location>
    <ligand>
        <name>Ni(2+)</name>
        <dbReference type="ChEBI" id="CHEBI:49786"/>
    </ligand>
</feature>
<gene>
    <name type="primary">slyD</name>
    <name type="ordered locus">c4123</name>
</gene>
<reference key="1">
    <citation type="journal article" date="2002" name="Proc. Natl. Acad. Sci. U.S.A.">
        <title>Extensive mosaic structure revealed by the complete genome sequence of uropathogenic Escherichia coli.</title>
        <authorList>
            <person name="Welch R.A."/>
            <person name="Burland V."/>
            <person name="Plunkett G. III"/>
            <person name="Redford P."/>
            <person name="Roesch P."/>
            <person name="Rasko D."/>
            <person name="Buckles E.L."/>
            <person name="Liou S.-R."/>
            <person name="Boutin A."/>
            <person name="Hackett J."/>
            <person name="Stroud D."/>
            <person name="Mayhew G.F."/>
            <person name="Rose D.J."/>
            <person name="Zhou S."/>
            <person name="Schwartz D.C."/>
            <person name="Perna N.T."/>
            <person name="Mobley H.L.T."/>
            <person name="Donnenberg M.S."/>
            <person name="Blattner F.R."/>
        </authorList>
    </citation>
    <scope>NUCLEOTIDE SEQUENCE [LARGE SCALE GENOMIC DNA]</scope>
    <source>
        <strain>CFT073 / ATCC 700928 / UPEC</strain>
    </source>
</reference>
<protein>
    <recommendedName>
        <fullName>FKBP-type peptidyl-prolyl cis-trans isomerase SlyD</fullName>
        <shortName>PPIase</shortName>
        <ecNumber>5.2.1.8</ecNumber>
    </recommendedName>
    <alternativeName>
        <fullName>Metallochaperone SlyD</fullName>
    </alternativeName>
</protein>
<proteinExistence type="inferred from homology"/>